<sequence>MQILLANPRGFCAGVDRAISIVENALAIYGAPIYVRHEVVHNRYVVDSLRKRGAIFIEQISEVPDGAILIFSAHGVSQAVRNEAKSRDLTVFDATCPLVTKVHMEVARASRRGEESILIGHAGHPEVEGTMGQYSNPEGGMYLVESPEDVWTLNVKNEGKLSFMTQTTLSVDDTSDVIDALRKRFPKIVGPRKDDICYATTNRQEAVRALAEQADVVLVVGSKNSSNSNRLAELAQRMGRTAFLIDDAADIQEAWVKEAACVGVTAGASAPDILVQNVIARLREFGGGEAVTLEGREENIVFEVPKELRVDVREVE</sequence>
<keyword id="KW-0004">4Fe-4S</keyword>
<keyword id="KW-0408">Iron</keyword>
<keyword id="KW-0411">Iron-sulfur</keyword>
<keyword id="KW-0414">Isoprene biosynthesis</keyword>
<keyword id="KW-0479">Metal-binding</keyword>
<keyword id="KW-0560">Oxidoreductase</keyword>
<organism>
    <name type="scientific">Salmonella paratyphi B (strain ATCC BAA-1250 / SPB7)</name>
    <dbReference type="NCBI Taxonomy" id="1016998"/>
    <lineage>
        <taxon>Bacteria</taxon>
        <taxon>Pseudomonadati</taxon>
        <taxon>Pseudomonadota</taxon>
        <taxon>Gammaproteobacteria</taxon>
        <taxon>Enterobacterales</taxon>
        <taxon>Enterobacteriaceae</taxon>
        <taxon>Salmonella</taxon>
    </lineage>
</organism>
<comment type="function">
    <text evidence="1">Catalyzes the conversion of 1-hydroxy-2-methyl-2-(E)-butenyl 4-diphosphate (HMBPP) into a mixture of isopentenyl diphosphate (IPP) and dimethylallyl diphosphate (DMAPP). Acts in the terminal step of the DOXP/MEP pathway for isoprenoid precursor biosynthesis.</text>
</comment>
<comment type="catalytic activity">
    <reaction evidence="1">
        <text>isopentenyl diphosphate + 2 oxidized [2Fe-2S]-[ferredoxin] + H2O = (2E)-4-hydroxy-3-methylbut-2-enyl diphosphate + 2 reduced [2Fe-2S]-[ferredoxin] + 2 H(+)</text>
        <dbReference type="Rhea" id="RHEA:24488"/>
        <dbReference type="Rhea" id="RHEA-COMP:10000"/>
        <dbReference type="Rhea" id="RHEA-COMP:10001"/>
        <dbReference type="ChEBI" id="CHEBI:15377"/>
        <dbReference type="ChEBI" id="CHEBI:15378"/>
        <dbReference type="ChEBI" id="CHEBI:33737"/>
        <dbReference type="ChEBI" id="CHEBI:33738"/>
        <dbReference type="ChEBI" id="CHEBI:128753"/>
        <dbReference type="ChEBI" id="CHEBI:128769"/>
        <dbReference type="EC" id="1.17.7.4"/>
    </reaction>
</comment>
<comment type="catalytic activity">
    <reaction evidence="1">
        <text>dimethylallyl diphosphate + 2 oxidized [2Fe-2S]-[ferredoxin] + H2O = (2E)-4-hydroxy-3-methylbut-2-enyl diphosphate + 2 reduced [2Fe-2S]-[ferredoxin] + 2 H(+)</text>
        <dbReference type="Rhea" id="RHEA:24825"/>
        <dbReference type="Rhea" id="RHEA-COMP:10000"/>
        <dbReference type="Rhea" id="RHEA-COMP:10001"/>
        <dbReference type="ChEBI" id="CHEBI:15377"/>
        <dbReference type="ChEBI" id="CHEBI:15378"/>
        <dbReference type="ChEBI" id="CHEBI:33737"/>
        <dbReference type="ChEBI" id="CHEBI:33738"/>
        <dbReference type="ChEBI" id="CHEBI:57623"/>
        <dbReference type="ChEBI" id="CHEBI:128753"/>
        <dbReference type="EC" id="1.17.7.4"/>
    </reaction>
</comment>
<comment type="cofactor">
    <cofactor evidence="1">
        <name>[4Fe-4S] cluster</name>
        <dbReference type="ChEBI" id="CHEBI:49883"/>
    </cofactor>
    <text evidence="1">Binds 1 [4Fe-4S] cluster per subunit.</text>
</comment>
<comment type="pathway">
    <text evidence="1">Isoprenoid biosynthesis; dimethylallyl diphosphate biosynthesis; dimethylallyl diphosphate from (2E)-4-hydroxy-3-methylbutenyl diphosphate: step 1/1.</text>
</comment>
<comment type="pathway">
    <text evidence="1">Isoprenoid biosynthesis; isopentenyl diphosphate biosynthesis via DXP pathway; isopentenyl diphosphate from 1-deoxy-D-xylulose 5-phosphate: step 6/6.</text>
</comment>
<comment type="subunit">
    <text evidence="1">Homodimer.</text>
</comment>
<comment type="similarity">
    <text evidence="1">Belongs to the IspH family.</text>
</comment>
<gene>
    <name evidence="1" type="primary">ispH</name>
    <name type="ordered locus">SPAB_00059</name>
</gene>
<protein>
    <recommendedName>
        <fullName evidence="1">4-hydroxy-3-methylbut-2-enyl diphosphate reductase</fullName>
        <shortName evidence="1">HMBPP reductase</shortName>
        <ecNumber evidence="1">1.17.7.4</ecNumber>
    </recommendedName>
</protein>
<proteinExistence type="inferred from homology"/>
<accession>A9MYG8</accession>
<reference key="1">
    <citation type="submission" date="2007-11" db="EMBL/GenBank/DDBJ databases">
        <authorList>
            <consortium name="The Salmonella enterica serovar Paratyphi B Genome Sequencing Project"/>
            <person name="McClelland M."/>
            <person name="Sanderson E.K."/>
            <person name="Porwollik S."/>
            <person name="Spieth J."/>
            <person name="Clifton W.S."/>
            <person name="Fulton R."/>
            <person name="Cordes M."/>
            <person name="Wollam A."/>
            <person name="Shah N."/>
            <person name="Pepin K."/>
            <person name="Bhonagiri V."/>
            <person name="Nash W."/>
            <person name="Johnson M."/>
            <person name="Thiruvilangam P."/>
            <person name="Wilson R."/>
        </authorList>
    </citation>
    <scope>NUCLEOTIDE SEQUENCE [LARGE SCALE GENOMIC DNA]</scope>
    <source>
        <strain>ATCC BAA-1250 / SPB7</strain>
    </source>
</reference>
<evidence type="ECO:0000255" key="1">
    <source>
        <dbReference type="HAMAP-Rule" id="MF_00191"/>
    </source>
</evidence>
<feature type="chain" id="PRO_1000077527" description="4-hydroxy-3-methylbut-2-enyl diphosphate reductase">
    <location>
        <begin position="1"/>
        <end position="316"/>
    </location>
</feature>
<feature type="active site" description="Proton donor" evidence="1">
    <location>
        <position position="126"/>
    </location>
</feature>
<feature type="binding site" evidence="1">
    <location>
        <position position="12"/>
    </location>
    <ligand>
        <name>[4Fe-4S] cluster</name>
        <dbReference type="ChEBI" id="CHEBI:49883"/>
    </ligand>
</feature>
<feature type="binding site" evidence="1">
    <location>
        <position position="41"/>
    </location>
    <ligand>
        <name>(2E)-4-hydroxy-3-methylbut-2-enyl diphosphate</name>
        <dbReference type="ChEBI" id="CHEBI:128753"/>
    </ligand>
</feature>
<feature type="binding site" evidence="1">
    <location>
        <position position="41"/>
    </location>
    <ligand>
        <name>dimethylallyl diphosphate</name>
        <dbReference type="ChEBI" id="CHEBI:57623"/>
    </ligand>
</feature>
<feature type="binding site" evidence="1">
    <location>
        <position position="41"/>
    </location>
    <ligand>
        <name>isopentenyl diphosphate</name>
        <dbReference type="ChEBI" id="CHEBI:128769"/>
    </ligand>
</feature>
<feature type="binding site" evidence="1">
    <location>
        <position position="74"/>
    </location>
    <ligand>
        <name>(2E)-4-hydroxy-3-methylbut-2-enyl diphosphate</name>
        <dbReference type="ChEBI" id="CHEBI:128753"/>
    </ligand>
</feature>
<feature type="binding site" evidence="1">
    <location>
        <position position="74"/>
    </location>
    <ligand>
        <name>dimethylallyl diphosphate</name>
        <dbReference type="ChEBI" id="CHEBI:57623"/>
    </ligand>
</feature>
<feature type="binding site" evidence="1">
    <location>
        <position position="74"/>
    </location>
    <ligand>
        <name>isopentenyl diphosphate</name>
        <dbReference type="ChEBI" id="CHEBI:128769"/>
    </ligand>
</feature>
<feature type="binding site" evidence="1">
    <location>
        <position position="96"/>
    </location>
    <ligand>
        <name>[4Fe-4S] cluster</name>
        <dbReference type="ChEBI" id="CHEBI:49883"/>
    </ligand>
</feature>
<feature type="binding site" evidence="1">
    <location>
        <position position="124"/>
    </location>
    <ligand>
        <name>(2E)-4-hydroxy-3-methylbut-2-enyl diphosphate</name>
        <dbReference type="ChEBI" id="CHEBI:128753"/>
    </ligand>
</feature>
<feature type="binding site" evidence="1">
    <location>
        <position position="124"/>
    </location>
    <ligand>
        <name>dimethylallyl diphosphate</name>
        <dbReference type="ChEBI" id="CHEBI:57623"/>
    </ligand>
</feature>
<feature type="binding site" evidence="1">
    <location>
        <position position="124"/>
    </location>
    <ligand>
        <name>isopentenyl diphosphate</name>
        <dbReference type="ChEBI" id="CHEBI:128769"/>
    </ligand>
</feature>
<feature type="binding site" evidence="1">
    <location>
        <position position="167"/>
    </location>
    <ligand>
        <name>(2E)-4-hydroxy-3-methylbut-2-enyl diphosphate</name>
        <dbReference type="ChEBI" id="CHEBI:128753"/>
    </ligand>
</feature>
<feature type="binding site" evidence="1">
    <location>
        <position position="197"/>
    </location>
    <ligand>
        <name>[4Fe-4S] cluster</name>
        <dbReference type="ChEBI" id="CHEBI:49883"/>
    </ligand>
</feature>
<feature type="binding site" evidence="1">
    <location>
        <position position="225"/>
    </location>
    <ligand>
        <name>(2E)-4-hydroxy-3-methylbut-2-enyl diphosphate</name>
        <dbReference type="ChEBI" id="CHEBI:128753"/>
    </ligand>
</feature>
<feature type="binding site" evidence="1">
    <location>
        <position position="225"/>
    </location>
    <ligand>
        <name>dimethylallyl diphosphate</name>
        <dbReference type="ChEBI" id="CHEBI:57623"/>
    </ligand>
</feature>
<feature type="binding site" evidence="1">
    <location>
        <position position="225"/>
    </location>
    <ligand>
        <name>isopentenyl diphosphate</name>
        <dbReference type="ChEBI" id="CHEBI:128769"/>
    </ligand>
</feature>
<feature type="binding site" evidence="1">
    <location>
        <position position="226"/>
    </location>
    <ligand>
        <name>(2E)-4-hydroxy-3-methylbut-2-enyl diphosphate</name>
        <dbReference type="ChEBI" id="CHEBI:128753"/>
    </ligand>
</feature>
<feature type="binding site" evidence="1">
    <location>
        <position position="226"/>
    </location>
    <ligand>
        <name>dimethylallyl diphosphate</name>
        <dbReference type="ChEBI" id="CHEBI:57623"/>
    </ligand>
</feature>
<feature type="binding site" evidence="1">
    <location>
        <position position="226"/>
    </location>
    <ligand>
        <name>isopentenyl diphosphate</name>
        <dbReference type="ChEBI" id="CHEBI:128769"/>
    </ligand>
</feature>
<feature type="binding site" evidence="1">
    <location>
        <position position="227"/>
    </location>
    <ligand>
        <name>(2E)-4-hydroxy-3-methylbut-2-enyl diphosphate</name>
        <dbReference type="ChEBI" id="CHEBI:128753"/>
    </ligand>
</feature>
<feature type="binding site" evidence="1">
    <location>
        <position position="227"/>
    </location>
    <ligand>
        <name>dimethylallyl diphosphate</name>
        <dbReference type="ChEBI" id="CHEBI:57623"/>
    </ligand>
</feature>
<feature type="binding site" evidence="1">
    <location>
        <position position="227"/>
    </location>
    <ligand>
        <name>isopentenyl diphosphate</name>
        <dbReference type="ChEBI" id="CHEBI:128769"/>
    </ligand>
</feature>
<feature type="binding site" evidence="1">
    <location>
        <position position="269"/>
    </location>
    <ligand>
        <name>(2E)-4-hydroxy-3-methylbut-2-enyl diphosphate</name>
        <dbReference type="ChEBI" id="CHEBI:128753"/>
    </ligand>
</feature>
<feature type="binding site" evidence="1">
    <location>
        <position position="269"/>
    </location>
    <ligand>
        <name>dimethylallyl diphosphate</name>
        <dbReference type="ChEBI" id="CHEBI:57623"/>
    </ligand>
</feature>
<feature type="binding site" evidence="1">
    <location>
        <position position="269"/>
    </location>
    <ligand>
        <name>isopentenyl diphosphate</name>
        <dbReference type="ChEBI" id="CHEBI:128769"/>
    </ligand>
</feature>
<name>ISPH_SALPB</name>
<dbReference type="EC" id="1.17.7.4" evidence="1"/>
<dbReference type="EMBL" id="CP000886">
    <property type="protein sequence ID" value="ABX65502.1"/>
    <property type="molecule type" value="Genomic_DNA"/>
</dbReference>
<dbReference type="RefSeq" id="WP_001166422.1">
    <property type="nucleotide sequence ID" value="NC_010102.1"/>
</dbReference>
<dbReference type="SMR" id="A9MYG8"/>
<dbReference type="KEGG" id="spq:SPAB_00059"/>
<dbReference type="PATRIC" id="fig|1016998.12.peg.58"/>
<dbReference type="HOGENOM" id="CLU_027486_1_0_6"/>
<dbReference type="BioCyc" id="SENT1016998:SPAB_RS00245-MONOMER"/>
<dbReference type="UniPathway" id="UPA00056">
    <property type="reaction ID" value="UER00097"/>
</dbReference>
<dbReference type="UniPathway" id="UPA00059">
    <property type="reaction ID" value="UER00105"/>
</dbReference>
<dbReference type="Proteomes" id="UP000008556">
    <property type="component" value="Chromosome"/>
</dbReference>
<dbReference type="GO" id="GO:0051539">
    <property type="term" value="F:4 iron, 4 sulfur cluster binding"/>
    <property type="evidence" value="ECO:0007669"/>
    <property type="project" value="UniProtKB-UniRule"/>
</dbReference>
<dbReference type="GO" id="GO:0051745">
    <property type="term" value="F:4-hydroxy-3-methylbut-2-enyl diphosphate reductase activity"/>
    <property type="evidence" value="ECO:0007669"/>
    <property type="project" value="UniProtKB-UniRule"/>
</dbReference>
<dbReference type="GO" id="GO:0046872">
    <property type="term" value="F:metal ion binding"/>
    <property type="evidence" value="ECO:0007669"/>
    <property type="project" value="UniProtKB-KW"/>
</dbReference>
<dbReference type="GO" id="GO:0050992">
    <property type="term" value="P:dimethylallyl diphosphate biosynthetic process"/>
    <property type="evidence" value="ECO:0007669"/>
    <property type="project" value="UniProtKB-UniRule"/>
</dbReference>
<dbReference type="GO" id="GO:0019288">
    <property type="term" value="P:isopentenyl diphosphate biosynthetic process, methylerythritol 4-phosphate pathway"/>
    <property type="evidence" value="ECO:0007669"/>
    <property type="project" value="UniProtKB-UniRule"/>
</dbReference>
<dbReference type="GO" id="GO:0016114">
    <property type="term" value="P:terpenoid biosynthetic process"/>
    <property type="evidence" value="ECO:0007669"/>
    <property type="project" value="UniProtKB-UniRule"/>
</dbReference>
<dbReference type="CDD" id="cd13944">
    <property type="entry name" value="lytB_ispH"/>
    <property type="match status" value="1"/>
</dbReference>
<dbReference type="FunFam" id="3.40.1010.20:FF:000001">
    <property type="entry name" value="4-hydroxy-3-methylbut-2-enyl diphosphate reductase"/>
    <property type="match status" value="1"/>
</dbReference>
<dbReference type="FunFam" id="3.40.50.11270:FF:000001">
    <property type="entry name" value="4-hydroxy-3-methylbut-2-enyl diphosphate reductase"/>
    <property type="match status" value="1"/>
</dbReference>
<dbReference type="Gene3D" id="3.40.50.11270">
    <property type="match status" value="1"/>
</dbReference>
<dbReference type="Gene3D" id="3.40.1010.20">
    <property type="entry name" value="4-hydroxy-3-methylbut-2-enyl diphosphate reductase, catalytic domain"/>
    <property type="match status" value="2"/>
</dbReference>
<dbReference type="HAMAP" id="MF_00191">
    <property type="entry name" value="IspH"/>
    <property type="match status" value="1"/>
</dbReference>
<dbReference type="InterPro" id="IPR003451">
    <property type="entry name" value="LytB/IspH"/>
</dbReference>
<dbReference type="NCBIfam" id="TIGR00216">
    <property type="entry name" value="ispH_lytB"/>
    <property type="match status" value="1"/>
</dbReference>
<dbReference type="NCBIfam" id="NF002188">
    <property type="entry name" value="PRK01045.1-2"/>
    <property type="match status" value="1"/>
</dbReference>
<dbReference type="NCBIfam" id="NF002190">
    <property type="entry name" value="PRK01045.1-4"/>
    <property type="match status" value="1"/>
</dbReference>
<dbReference type="PANTHER" id="PTHR30426">
    <property type="entry name" value="4-HYDROXY-3-METHYLBUT-2-ENYL DIPHOSPHATE REDUCTASE"/>
    <property type="match status" value="1"/>
</dbReference>
<dbReference type="PANTHER" id="PTHR30426:SF0">
    <property type="entry name" value="4-HYDROXY-3-METHYLBUT-2-ENYL DIPHOSPHATE REDUCTASE"/>
    <property type="match status" value="1"/>
</dbReference>
<dbReference type="Pfam" id="PF02401">
    <property type="entry name" value="LYTB"/>
    <property type="match status" value="1"/>
</dbReference>